<reference key="1">
    <citation type="journal article" date="2009" name="PLoS Genet.">
        <title>Organised genome dynamics in the Escherichia coli species results in highly diverse adaptive paths.</title>
        <authorList>
            <person name="Touchon M."/>
            <person name="Hoede C."/>
            <person name="Tenaillon O."/>
            <person name="Barbe V."/>
            <person name="Baeriswyl S."/>
            <person name="Bidet P."/>
            <person name="Bingen E."/>
            <person name="Bonacorsi S."/>
            <person name="Bouchier C."/>
            <person name="Bouvet O."/>
            <person name="Calteau A."/>
            <person name="Chiapello H."/>
            <person name="Clermont O."/>
            <person name="Cruveiller S."/>
            <person name="Danchin A."/>
            <person name="Diard M."/>
            <person name="Dossat C."/>
            <person name="Karoui M.E."/>
            <person name="Frapy E."/>
            <person name="Garry L."/>
            <person name="Ghigo J.M."/>
            <person name="Gilles A.M."/>
            <person name="Johnson J."/>
            <person name="Le Bouguenec C."/>
            <person name="Lescat M."/>
            <person name="Mangenot S."/>
            <person name="Martinez-Jehanne V."/>
            <person name="Matic I."/>
            <person name="Nassif X."/>
            <person name="Oztas S."/>
            <person name="Petit M.A."/>
            <person name="Pichon C."/>
            <person name="Rouy Z."/>
            <person name="Ruf C.S."/>
            <person name="Schneider D."/>
            <person name="Tourret J."/>
            <person name="Vacherie B."/>
            <person name="Vallenet D."/>
            <person name="Medigue C."/>
            <person name="Rocha E.P.C."/>
            <person name="Denamur E."/>
        </authorList>
    </citation>
    <scope>NUCLEOTIDE SEQUENCE [LARGE SCALE GENOMIC DNA]</scope>
    <source>
        <strain>S88 / ExPEC</strain>
    </source>
</reference>
<sequence length="477" mass="52822">MQVLHVCSEMFPLLKTGGLADVIGALPAAQIADGVDARVLLPAFPDIRRGVTDAQVVSRRDTFAGHITLLFGHYNGVGIYLIDAPHLYDRPGSPYHDTNLFAYTDNVLRFALLGWVGAEMASGLDPFWRPDVVHAHDWHAGLAPAYLAARGRPAKSVFTVHNLAYQGMFYAHHMNDIQLPWSFFNIHGLEFNGQISFLKAGLYYADHITAVSPTYAREITEPQFAYGMEGLLQQRHREGRLSGVLNGVDEKIWSPETDLLLASRYTRDTLEDKAENKRQLQIAMGLKVDDKVPLFAVVSRLTSQKGLDLVLEALPGLLEQGGQLALLGAGDPVLQEGFLAAAAEYPGQVGVQIGYHEAFSHRIMGGADVILVPSRFEPCGLTQLYGLKYGTLPLVRRTGGLADTVSDCSLENLADGVASGFVFEDSNAWSLLRAIRRAFVLWSRPSLWRFVQRQAMAMDFSWQVAAKSYRELYYRLK</sequence>
<feature type="chain" id="PRO_1000126065" description="Glycogen synthase">
    <location>
        <begin position="1"/>
        <end position="477"/>
    </location>
</feature>
<feature type="binding site" evidence="1">
    <location>
        <position position="15"/>
    </location>
    <ligand>
        <name>ADP-alpha-D-glucose</name>
        <dbReference type="ChEBI" id="CHEBI:57498"/>
    </ligand>
</feature>
<proteinExistence type="inferred from homology"/>
<evidence type="ECO:0000255" key="1">
    <source>
        <dbReference type="HAMAP-Rule" id="MF_00484"/>
    </source>
</evidence>
<name>GLGA_ECO45</name>
<gene>
    <name evidence="1" type="primary">glgA</name>
    <name type="ordered locus">ECS88_3827</name>
</gene>
<comment type="function">
    <text evidence="1">Synthesizes alpha-1,4-glucan chains using ADP-glucose.</text>
</comment>
<comment type="catalytic activity">
    <reaction evidence="1">
        <text>[(1-&gt;4)-alpha-D-glucosyl](n) + ADP-alpha-D-glucose = [(1-&gt;4)-alpha-D-glucosyl](n+1) + ADP + H(+)</text>
        <dbReference type="Rhea" id="RHEA:18189"/>
        <dbReference type="Rhea" id="RHEA-COMP:9584"/>
        <dbReference type="Rhea" id="RHEA-COMP:9587"/>
        <dbReference type="ChEBI" id="CHEBI:15378"/>
        <dbReference type="ChEBI" id="CHEBI:15444"/>
        <dbReference type="ChEBI" id="CHEBI:57498"/>
        <dbReference type="ChEBI" id="CHEBI:456216"/>
        <dbReference type="EC" id="2.4.1.21"/>
    </reaction>
</comment>
<comment type="pathway">
    <text evidence="1">Glycan biosynthesis; glycogen biosynthesis.</text>
</comment>
<comment type="similarity">
    <text evidence="1">Belongs to the glycosyltransferase 1 family. Bacterial/plant glycogen synthase subfamily.</text>
</comment>
<keyword id="KW-0320">Glycogen biosynthesis</keyword>
<keyword id="KW-0328">Glycosyltransferase</keyword>
<keyword id="KW-1185">Reference proteome</keyword>
<keyword id="KW-0808">Transferase</keyword>
<accession>B7MDR4</accession>
<dbReference type="EC" id="2.4.1.21" evidence="1"/>
<dbReference type="EMBL" id="CU928161">
    <property type="protein sequence ID" value="CAR05039.1"/>
    <property type="molecule type" value="Genomic_DNA"/>
</dbReference>
<dbReference type="RefSeq" id="WP_001197646.1">
    <property type="nucleotide sequence ID" value="NC_011742.1"/>
</dbReference>
<dbReference type="SMR" id="B7MDR4"/>
<dbReference type="CAZy" id="GT5">
    <property type="family name" value="Glycosyltransferase Family 5"/>
</dbReference>
<dbReference type="GeneID" id="75202274"/>
<dbReference type="KEGG" id="ecz:ECS88_3827"/>
<dbReference type="HOGENOM" id="CLU_009583_18_2_6"/>
<dbReference type="UniPathway" id="UPA00164"/>
<dbReference type="Proteomes" id="UP000000747">
    <property type="component" value="Chromosome"/>
</dbReference>
<dbReference type="GO" id="GO:0005829">
    <property type="term" value="C:cytosol"/>
    <property type="evidence" value="ECO:0007669"/>
    <property type="project" value="TreeGrafter"/>
</dbReference>
<dbReference type="GO" id="GO:0009011">
    <property type="term" value="F:alpha-1,4-glucan glucosyltransferase (ADP-glucose donor) activity"/>
    <property type="evidence" value="ECO:0007669"/>
    <property type="project" value="UniProtKB-UniRule"/>
</dbReference>
<dbReference type="GO" id="GO:0004373">
    <property type="term" value="F:alpha-1,4-glucan glucosyltransferase (UDP-glucose donor) activity"/>
    <property type="evidence" value="ECO:0007669"/>
    <property type="project" value="InterPro"/>
</dbReference>
<dbReference type="GO" id="GO:0005978">
    <property type="term" value="P:glycogen biosynthetic process"/>
    <property type="evidence" value="ECO:0007669"/>
    <property type="project" value="UniProtKB-UniRule"/>
</dbReference>
<dbReference type="CDD" id="cd03791">
    <property type="entry name" value="GT5_Glycogen_synthase_DULL1-like"/>
    <property type="match status" value="1"/>
</dbReference>
<dbReference type="FunFam" id="3.40.50.2000:FF:000008">
    <property type="entry name" value="Glycogen synthase"/>
    <property type="match status" value="1"/>
</dbReference>
<dbReference type="FunFam" id="3.40.50.2000:FF:000011">
    <property type="entry name" value="Glycogen synthase"/>
    <property type="match status" value="1"/>
</dbReference>
<dbReference type="Gene3D" id="3.40.50.2000">
    <property type="entry name" value="Glycogen Phosphorylase B"/>
    <property type="match status" value="2"/>
</dbReference>
<dbReference type="HAMAP" id="MF_00484">
    <property type="entry name" value="Glycogen_synth"/>
    <property type="match status" value="1"/>
</dbReference>
<dbReference type="InterPro" id="IPR001296">
    <property type="entry name" value="Glyco_trans_1"/>
</dbReference>
<dbReference type="InterPro" id="IPR011835">
    <property type="entry name" value="GS/SS"/>
</dbReference>
<dbReference type="InterPro" id="IPR013534">
    <property type="entry name" value="Starch_synth_cat_dom"/>
</dbReference>
<dbReference type="NCBIfam" id="TIGR02095">
    <property type="entry name" value="glgA"/>
    <property type="match status" value="1"/>
</dbReference>
<dbReference type="NCBIfam" id="NF001899">
    <property type="entry name" value="PRK00654.1-2"/>
    <property type="match status" value="1"/>
</dbReference>
<dbReference type="PANTHER" id="PTHR45825:SF11">
    <property type="entry name" value="ALPHA AMYLASE DOMAIN-CONTAINING PROTEIN"/>
    <property type="match status" value="1"/>
</dbReference>
<dbReference type="PANTHER" id="PTHR45825">
    <property type="entry name" value="GRANULE-BOUND STARCH SYNTHASE 1, CHLOROPLASTIC/AMYLOPLASTIC"/>
    <property type="match status" value="1"/>
</dbReference>
<dbReference type="Pfam" id="PF08323">
    <property type="entry name" value="Glyco_transf_5"/>
    <property type="match status" value="1"/>
</dbReference>
<dbReference type="Pfam" id="PF00534">
    <property type="entry name" value="Glycos_transf_1"/>
    <property type="match status" value="1"/>
</dbReference>
<dbReference type="SUPFAM" id="SSF53756">
    <property type="entry name" value="UDP-Glycosyltransferase/glycogen phosphorylase"/>
    <property type="match status" value="1"/>
</dbReference>
<organism>
    <name type="scientific">Escherichia coli O45:K1 (strain S88 / ExPEC)</name>
    <dbReference type="NCBI Taxonomy" id="585035"/>
    <lineage>
        <taxon>Bacteria</taxon>
        <taxon>Pseudomonadati</taxon>
        <taxon>Pseudomonadota</taxon>
        <taxon>Gammaproteobacteria</taxon>
        <taxon>Enterobacterales</taxon>
        <taxon>Enterobacteriaceae</taxon>
        <taxon>Escherichia</taxon>
    </lineage>
</organism>
<protein>
    <recommendedName>
        <fullName evidence="1">Glycogen synthase</fullName>
        <ecNumber evidence="1">2.4.1.21</ecNumber>
    </recommendedName>
    <alternativeName>
        <fullName evidence="1">Starch [bacterial glycogen] synthase</fullName>
    </alternativeName>
</protein>